<organism>
    <name type="scientific">African swine fever virus (isolate Tick/South Africa/Pretoriuskop Pr4/1996)</name>
    <name type="common">ASFV</name>
    <dbReference type="NCBI Taxonomy" id="561443"/>
    <lineage>
        <taxon>Viruses</taxon>
        <taxon>Varidnaviria</taxon>
        <taxon>Bamfordvirae</taxon>
        <taxon>Nucleocytoviricota</taxon>
        <taxon>Pokkesviricetes</taxon>
        <taxon>Asfuvirales</taxon>
        <taxon>Asfarviridae</taxon>
        <taxon>Asfivirus</taxon>
        <taxon>African swine fever virus</taxon>
    </lineage>
</organism>
<accession>P0CAK8</accession>
<gene>
    <name type="ordered locus">Pret-005</name>
</gene>
<feature type="chain" id="PRO_0000373737" description="Protein L83L">
    <location>
        <begin position="1"/>
        <end position="81"/>
    </location>
</feature>
<feature type="region of interest" description="Disordered" evidence="2">
    <location>
        <begin position="1"/>
        <end position="28"/>
    </location>
</feature>
<feature type="compositionally biased region" description="Basic and acidic residues" evidence="2">
    <location>
        <begin position="14"/>
        <end position="28"/>
    </location>
</feature>
<organismHost>
    <name type="scientific">Ornithodoros</name>
    <name type="common">relapsing fever ticks</name>
    <dbReference type="NCBI Taxonomy" id="6937"/>
</organismHost>
<organismHost>
    <name type="scientific">Phacochoerus aethiopicus</name>
    <name type="common">Warthog</name>
    <dbReference type="NCBI Taxonomy" id="85517"/>
</organismHost>
<organismHost>
    <name type="scientific">Phacochoerus africanus</name>
    <name type="common">Warthog</name>
    <dbReference type="NCBI Taxonomy" id="41426"/>
</organismHost>
<organismHost>
    <name type="scientific">Potamochoerus larvatus</name>
    <name type="common">Bushpig</name>
    <dbReference type="NCBI Taxonomy" id="273792"/>
</organismHost>
<organismHost>
    <name type="scientific">Sus scrofa</name>
    <name type="common">Pig</name>
    <dbReference type="NCBI Taxonomy" id="9823"/>
</organismHost>
<keyword id="KW-0244">Early protein</keyword>
<keyword id="KW-1035">Host cytoplasm</keyword>
<keyword id="KW-0945">Host-virus interaction</keyword>
<evidence type="ECO:0000250" key="1">
    <source>
        <dbReference type="UniProtKB" id="Q65132"/>
    </source>
</evidence>
<evidence type="ECO:0000256" key="2">
    <source>
        <dbReference type="SAM" id="MobiDB-lite"/>
    </source>
</evidence>
<evidence type="ECO:0000305" key="3"/>
<sequence length="81" mass="9416">MDTSLKNNDGALDADNKNYQDYKDEPDKTSDVLDVTKYNSMVDCCHKNYSTFTSEWYINERKYNDVPEGPKKADVHRCTII</sequence>
<name>L83L_ASFP4</name>
<proteinExistence type="inferred from homology"/>
<protein>
    <recommendedName>
        <fullName>Protein L83L</fullName>
    </recommendedName>
</protein>
<dbReference type="EMBL" id="AY261363">
    <property type="status" value="NOT_ANNOTATED_CDS"/>
    <property type="molecule type" value="Genomic_DNA"/>
</dbReference>
<dbReference type="Proteomes" id="UP000000859">
    <property type="component" value="Segment"/>
</dbReference>
<dbReference type="GO" id="GO:0030430">
    <property type="term" value="C:host cell cytoplasm"/>
    <property type="evidence" value="ECO:0007669"/>
    <property type="project" value="UniProtKB-SubCell"/>
</dbReference>
<comment type="function">
    <text evidence="1">May subvert the host innate immune response by interacting with host IL1B and interfering with its function.</text>
</comment>
<comment type="subunit">
    <text evidence="1">Interacts with host IL1B.</text>
</comment>
<comment type="subcellular location">
    <subcellularLocation>
        <location evidence="1">Host cytoplasm</location>
    </subcellularLocation>
</comment>
<comment type="induction">
    <text evidence="3">Expressed in the early phase of the viral replicative cycle.</text>
</comment>
<comment type="similarity">
    <text evidence="3">Belongs to the asfivirus L83L family.</text>
</comment>
<reference key="1">
    <citation type="submission" date="2003-03" db="EMBL/GenBank/DDBJ databases">
        <title>African swine fever virus genomes.</title>
        <authorList>
            <person name="Kutish G.F."/>
            <person name="Rock D.L."/>
        </authorList>
    </citation>
    <scope>NUCLEOTIDE SEQUENCE [LARGE SCALE GENOMIC DNA]</scope>
</reference>